<gene>
    <name type="primary">SEZ6</name>
</gene>
<sequence length="994" mass="107425">MRPVALLLLPSLLALLAHGLSLEAPTVGKGQAPGIEETDGELTAAPTPEQPERGVHFVTTAPTLKLLNHHPLLEEFLQEGLEKGDEELRPALPFQPDPPAPFTPSPLPRLANQDSRPVFTSPTPAMAAVPTQPQSKEGPWSPESESPMLRITAPLPPGPSMAVPTLGPGEIASTTPPSRAWTPTQEGPGDMGRPWVAEVVSQGAGIGIQGTITSSTASGDDEETTTTTTIITTTITTVQTPGPCSWNFSGPEGSLDSPTDLSSPTDVGLDCFFYISVYPGYGVEIKVQNISLREGETVTVEGLGGPDPLPLANQSFLLRGQVIRSPTHQAALRFQSLPPPAGPGTFHFHYQAYLLSCHFPRRPAYGDVTVTSLHPGGSARFHCATGYQLKGARHLTCLNATQPFWDSKEPVCIAACGGVIRNATTGRIVSPGFPGNYSNNLTCHWLLEAPEGQRLHLHFEKVSLAEDDDRLIIRNGDNVEAPPVYDSYEVEYLPIEGLLSSGKHFFVELSTDSSGAAAGMALRYEAFQQGHCYEPFVKYGNFSSSTPTYPVGTTVEFSCDPGYTLEQGSIIIECVDPHDPQWNETEPACRAVCSGEITDSAGVVLSPNWPEPYGRGQDCIWGVHVEEDKRIMLDIRVLRIGPGDVLTFYDGDDLTARVLGQYSGPRSHFKLFTSMADVTIQFQSDPGTSVLGYQQGFVIHFFEVPRNDTCPELPEIPNGWKSPSQPELVHGTVVTYQCYPGYQVVGSSVLMCQWDLTWSEDLPSCQRVTSCHDPGDVEHSRRLISSPKFPVGATVQYICDQGFVLMGSSILTCHDRQAGSPKWSDRAPKCLLEQLKPCHGLSAPENGARSPEKQLHPAGATIHFSCAPGYVLKGQASIKCVPGHPSHWSDPPPICRAASLDGFYNSRSLDVAKAPAASSTLDAAHIAAAIFLPLVAMVLLVGGVYFYFSRLQGKSSLQLPRPRPRPYNRITIESAFDNPTYETGSLSFAGDERI</sequence>
<name>SEZ6_HUMAN</name>
<feature type="signal peptide" evidence="2">
    <location>
        <begin position="1"/>
        <end position="19"/>
    </location>
</feature>
<feature type="chain" id="PRO_0000341346" description="Seizure protein 6 homolog">
    <location>
        <begin position="20"/>
        <end position="994"/>
    </location>
</feature>
<feature type="topological domain" description="Extracellular" evidence="2">
    <location>
        <begin position="20"/>
        <end position="925"/>
    </location>
</feature>
<feature type="transmembrane region" description="Helical" evidence="2">
    <location>
        <begin position="926"/>
        <end position="946"/>
    </location>
</feature>
<feature type="topological domain" description="Cytoplasmic" evidence="2">
    <location>
        <begin position="947"/>
        <end position="994"/>
    </location>
</feature>
<feature type="domain" description="Sushi 1" evidence="4">
    <location>
        <begin position="355"/>
        <end position="414"/>
    </location>
</feature>
<feature type="domain" description="CUB 1" evidence="3">
    <location>
        <begin position="416"/>
        <end position="527"/>
    </location>
</feature>
<feature type="domain" description="Sushi 2" evidence="4">
    <location>
        <begin position="530"/>
        <end position="591"/>
    </location>
</feature>
<feature type="domain" description="CUB 2" evidence="3">
    <location>
        <begin position="593"/>
        <end position="704"/>
    </location>
</feature>
<feature type="domain" description="Sushi 3" evidence="4">
    <location>
        <begin position="708"/>
        <end position="767"/>
    </location>
</feature>
<feature type="domain" description="Sushi 4" evidence="4">
    <location>
        <begin position="769"/>
        <end position="832"/>
    </location>
</feature>
<feature type="domain" description="Sushi 5" evidence="4">
    <location>
        <begin position="836"/>
        <end position="897"/>
    </location>
</feature>
<feature type="region of interest" description="Disordered" evidence="5">
    <location>
        <begin position="28"/>
        <end position="50"/>
    </location>
</feature>
<feature type="region of interest" description="O-glycosylated at two sites">
    <location>
        <begin position="38"/>
        <end position="47"/>
    </location>
</feature>
<feature type="region of interest" description="O-glycosylated at two sites">
    <location>
        <begin position="59"/>
        <end position="63"/>
    </location>
</feature>
<feature type="region of interest" description="Disordered" evidence="5">
    <location>
        <begin position="88"/>
        <end position="146"/>
    </location>
</feature>
<feature type="region of interest" description="Disordered" evidence="5">
    <location>
        <begin position="171"/>
        <end position="191"/>
    </location>
</feature>
<feature type="region of interest" description="Disordered" evidence="5">
    <location>
        <begin position="241"/>
        <end position="261"/>
    </location>
</feature>
<feature type="compositionally biased region" description="Pro residues" evidence="5">
    <location>
        <begin position="93"/>
        <end position="107"/>
    </location>
</feature>
<feature type="compositionally biased region" description="Polar residues" evidence="5">
    <location>
        <begin position="112"/>
        <end position="123"/>
    </location>
</feature>
<feature type="compositionally biased region" description="Polar residues" evidence="5">
    <location>
        <begin position="172"/>
        <end position="185"/>
    </location>
</feature>
<feature type="glycosylation site" description="N-linked (GlcNAc...) asparagine" evidence="2">
    <location>
        <position position="289"/>
    </location>
</feature>
<feature type="glycosylation site" description="N-linked (GlcNAc...) asparagine" evidence="2">
    <location>
        <position position="399"/>
    </location>
</feature>
<feature type="glycosylation site" description="N-linked (GlcNAc...) asparagine" evidence="2">
    <location>
        <position position="436"/>
    </location>
</feature>
<feature type="glycosylation site" description="N-linked (GlcNAc...) asparagine" evidence="2">
    <location>
        <position position="541"/>
    </location>
</feature>
<feature type="disulfide bond" evidence="1">
    <location>
        <begin position="357"/>
        <end position="397"/>
    </location>
</feature>
<feature type="disulfide bond" evidence="1">
    <location>
        <begin position="383"/>
        <end position="412"/>
    </location>
</feature>
<feature type="disulfide bond" evidence="1">
    <location>
        <begin position="416"/>
        <end position="443"/>
    </location>
</feature>
<feature type="disulfide bond" evidence="1">
    <location>
        <begin position="532"/>
        <end position="574"/>
    </location>
</feature>
<feature type="disulfide bond" evidence="1">
    <location>
        <begin position="559"/>
        <end position="589"/>
    </location>
</feature>
<feature type="disulfide bond" evidence="1">
    <location>
        <begin position="593"/>
        <end position="619"/>
    </location>
</feature>
<feature type="disulfide bond" evidence="1">
    <location>
        <begin position="710"/>
        <end position="752"/>
    </location>
</feature>
<feature type="disulfide bond" evidence="1">
    <location>
        <begin position="738"/>
        <end position="765"/>
    </location>
</feature>
<feature type="disulfide bond" evidence="1">
    <location>
        <begin position="771"/>
        <end position="813"/>
    </location>
</feature>
<feature type="disulfide bond" evidence="1">
    <location>
        <begin position="799"/>
        <end position="830"/>
    </location>
</feature>
<feature type="disulfide bond" evidence="1">
    <location>
        <begin position="838"/>
        <end position="880"/>
    </location>
</feature>
<feature type="disulfide bond" evidence="1">
    <location>
        <begin position="866"/>
        <end position="895"/>
    </location>
</feature>
<feature type="splice variant" id="VSP_034250" description="In isoform 2." evidence="8">
    <location>
        <begin position="1"/>
        <end position="125"/>
    </location>
</feature>
<feature type="splice variant" id="VSP_034251" description="In isoform 4." evidence="10">
    <original>LPIEGLLSSGKHFFVE</original>
    <variation>PPPPPPLQPHYHRVSV</variation>
    <location>
        <begin position="493"/>
        <end position="508"/>
    </location>
</feature>
<feature type="splice variant" id="VSP_034252" description="In isoform 4." evidence="10">
    <location>
        <begin position="509"/>
        <end position="994"/>
    </location>
</feature>
<feature type="splice variant" id="VSP_034253" description="In isoform 3." evidence="9">
    <original>SLSFAGDERI</original>
    <variation>ETREYEVSI</variation>
    <location>
        <begin position="985"/>
        <end position="994"/>
    </location>
</feature>
<feature type="sequence variant" id="VAR_044048" description="In dbSNP:rs1428430471." evidence="7">
    <original>V</original>
    <variation>M</variation>
    <location>
        <position position="300"/>
    </location>
</feature>
<feature type="sequence variant" id="VAR_044049" description="In dbSNP:rs754657367." evidence="7">
    <original>A</original>
    <variation>V</variation>
    <location>
        <position position="330"/>
    </location>
</feature>
<feature type="sequence variant" id="VAR_044050" description="In dbSNP:rs1976165.">
    <original>T</original>
    <variation>A</variation>
    <location>
        <position position="546"/>
    </location>
</feature>
<feature type="sequence variant" id="VAR_044051" description="In dbSNP:rs1397876475." evidence="7">
    <original>V</original>
    <variation>A</variation>
    <location>
        <position position="592"/>
    </location>
</feature>
<feature type="sequence variant" id="VAR_044052" evidence="7">
    <original>Y</original>
    <variation>N</variation>
    <location>
        <position position="736"/>
    </location>
</feature>
<feature type="sequence variant" id="VAR_044053" evidence="7">
    <original>L</original>
    <variation>V</variation>
    <location>
        <position position="756"/>
    </location>
</feature>
<feature type="sequence variant" id="VAR_044054" description="In dbSNP:rs12941884." evidence="6">
    <original>M</original>
    <variation>T</variation>
    <location>
        <position position="806"/>
    </location>
</feature>
<feature type="sequence conflict" description="In Ref. 1; AAM22213/AAM22214/AAK71497." evidence="11" ref="1">
    <original>Q</original>
    <variation>H</variation>
    <location>
        <position position="78"/>
    </location>
</feature>
<feature type="sequence conflict" description="In Ref. 1; AAM22213/AAM22214/AAK71497." evidence="11" ref="1">
    <original>P</original>
    <variation>S</variation>
    <location>
        <position position="93"/>
    </location>
</feature>
<feature type="sequence conflict" description="In Ref. 1; AAM22213/AAM22214/AAK71497." evidence="11" ref="1">
    <original>S</original>
    <variation>SPD</variation>
    <location>
        <position position="141"/>
    </location>
</feature>
<feature type="sequence conflict" description="In Ref. 1; AAM22213/AAK71497." evidence="11" ref="1">
    <original>Q</original>
    <variation>K</variation>
    <location>
        <position position="288"/>
    </location>
</feature>
<feature type="sequence conflict" description="In Ref. 3; BAD97340." evidence="11" ref="3">
    <original>F</original>
    <variation>L</variation>
    <location>
        <position position="359"/>
    </location>
</feature>
<feature type="sequence conflict" description="In Ref. 1; AAM22213/AAK71497." evidence="11" ref="1">
    <original>AACG</original>
    <variation>GECP</variation>
    <location>
        <begin position="414"/>
        <end position="417"/>
    </location>
</feature>
<feature type="sequence conflict" description="In Ref. 1; AAM22213/AAK71497." evidence="11" ref="1">
    <original>G</original>
    <variation>P</variation>
    <location>
        <position position="417"/>
    </location>
</feature>
<feature type="sequence conflict" description="In Ref. 2; BAB70912." evidence="11" ref="2">
    <original>D</original>
    <variation>G</variation>
    <location>
        <position position="815"/>
    </location>
</feature>
<organism>
    <name type="scientific">Homo sapiens</name>
    <name type="common">Human</name>
    <dbReference type="NCBI Taxonomy" id="9606"/>
    <lineage>
        <taxon>Eukaryota</taxon>
        <taxon>Metazoa</taxon>
        <taxon>Chordata</taxon>
        <taxon>Craniata</taxon>
        <taxon>Vertebrata</taxon>
        <taxon>Euteleostomi</taxon>
        <taxon>Mammalia</taxon>
        <taxon>Eutheria</taxon>
        <taxon>Euarchontoglires</taxon>
        <taxon>Primates</taxon>
        <taxon>Haplorrhini</taxon>
        <taxon>Catarrhini</taxon>
        <taxon>Hominidae</taxon>
        <taxon>Homo</taxon>
    </lineage>
</organism>
<accession>Q53EL9</accession>
<accession>B6ZDN1</accession>
<accession>Q8N701</accession>
<accession>Q8NB57</accession>
<accession>Q8ND50</accession>
<accession>Q8TD25</accession>
<accession>Q96NI5</accession>
<accession>Q96NQ3</accession>
<comment type="function">
    <text evidence="1">May play a role in cell-cell recognition and in neuronal membrane signaling. Seems to be important for the achievement of the necessary balance between dendrite elongation and branching during the elaboration of a complex dendritic arbor. Involved in the development of appropriate excitatory synaptic connectivity (By similarity).</text>
</comment>
<comment type="interaction">
    <interactant intactId="EBI-723710">
        <id>Q53EL9</id>
    </interactant>
    <interactant intactId="EBI-947187">
        <id>Q9UHD9</id>
        <label>UBQLN2</label>
    </interactant>
    <organismsDiffer>false</organismsDiffer>
    <experiments>3</experiments>
</comment>
<comment type="subcellular location">
    <subcellularLocation>
        <location evidence="1">Cell membrane</location>
        <topology evidence="1">Single-pass type I membrane protein</topology>
    </subcellularLocation>
    <text evidence="1">Localized on dendrites and in the synaptic and postsynaptic fraction.</text>
</comment>
<comment type="alternative products">
    <event type="alternative splicing"/>
    <isoform>
        <id>Q53EL9-1</id>
        <name>1</name>
        <sequence type="displayed"/>
    </isoform>
    <isoform>
        <id>Q53EL9-2</id>
        <name>2</name>
        <sequence type="described" ref="VSP_034250"/>
    </isoform>
    <isoform>
        <id>Q53EL9-3</id>
        <name>3</name>
        <sequence type="described" ref="VSP_034253"/>
    </isoform>
    <isoform>
        <id>Q53EL9-4</id>
        <name>4</name>
        <name>SEZ6b</name>
        <sequence type="described" ref="VSP_034251 VSP_034252"/>
    </isoform>
</comment>
<comment type="PTM">
    <text evidence="1">Glycosylated.</text>
</comment>
<comment type="similarity">
    <text evidence="11">Belongs to the SEZ6 family.</text>
</comment>
<comment type="sequence caution" evidence="11">
    <conflict type="frameshift">
        <sequence resource="EMBL-CDS" id="AAK71497"/>
    </conflict>
</comment>
<comment type="sequence caution" evidence="11">
    <conflict type="frameshift">
        <sequence resource="EMBL-CDS" id="AAM22213"/>
    </conflict>
</comment>
<comment type="sequence caution" evidence="11">
    <conflict type="erroneous initiation">
        <sequence resource="EMBL-CDS" id="BAB70826"/>
    </conflict>
    <text>Truncated N-terminus.</text>
</comment>
<comment type="sequence caution" evidence="11">
    <conflict type="erroneous initiation">
        <sequence resource="EMBL-CDS" id="BAB70912"/>
    </conflict>
    <text>Truncated N-terminus.</text>
</comment>
<evidence type="ECO:0000250" key="1"/>
<evidence type="ECO:0000255" key="2"/>
<evidence type="ECO:0000255" key="3">
    <source>
        <dbReference type="PROSITE-ProRule" id="PRU00059"/>
    </source>
</evidence>
<evidence type="ECO:0000255" key="4">
    <source>
        <dbReference type="PROSITE-ProRule" id="PRU00302"/>
    </source>
</evidence>
<evidence type="ECO:0000256" key="5">
    <source>
        <dbReference type="SAM" id="MobiDB-lite"/>
    </source>
</evidence>
<evidence type="ECO:0000269" key="6">
    <source>
    </source>
</evidence>
<evidence type="ECO:0000269" key="7">
    <source>
    </source>
</evidence>
<evidence type="ECO:0000303" key="8">
    <source>
    </source>
</evidence>
<evidence type="ECO:0000303" key="9">
    <source>
    </source>
</evidence>
<evidence type="ECO:0000303" key="10">
    <source ref="1"/>
</evidence>
<evidence type="ECO:0000305" key="11"/>
<keyword id="KW-0025">Alternative splicing</keyword>
<keyword id="KW-1003">Cell membrane</keyword>
<keyword id="KW-1015">Disulfide bond</keyword>
<keyword id="KW-0325">Glycoprotein</keyword>
<keyword id="KW-0472">Membrane</keyword>
<keyword id="KW-1267">Proteomics identification</keyword>
<keyword id="KW-1185">Reference proteome</keyword>
<keyword id="KW-0677">Repeat</keyword>
<keyword id="KW-0732">Signal</keyword>
<keyword id="KW-0768">Sushi</keyword>
<keyword id="KW-0812">Transmembrane</keyword>
<keyword id="KW-1133">Transmembrane helix</keyword>
<dbReference type="EMBL" id="AY038048">
    <property type="protein sequence ID" value="AAK71497.1"/>
    <property type="status" value="ALT_FRAME"/>
    <property type="molecule type" value="mRNA"/>
</dbReference>
<dbReference type="EMBL" id="AF502129">
    <property type="protein sequence ID" value="AAM22213.1"/>
    <property type="status" value="ALT_FRAME"/>
    <property type="molecule type" value="mRNA"/>
</dbReference>
<dbReference type="EMBL" id="AF502130">
    <property type="protein sequence ID" value="AAM22214.1"/>
    <property type="molecule type" value="mRNA"/>
</dbReference>
<dbReference type="EMBL" id="AK054913">
    <property type="protein sequence ID" value="BAB70826.1"/>
    <property type="status" value="ALT_INIT"/>
    <property type="molecule type" value="mRNA"/>
</dbReference>
<dbReference type="EMBL" id="AK055383">
    <property type="protein sequence ID" value="BAB70912.1"/>
    <property type="status" value="ALT_INIT"/>
    <property type="molecule type" value="mRNA"/>
</dbReference>
<dbReference type="EMBL" id="AK091522">
    <property type="protein sequence ID" value="BAC03684.1"/>
    <property type="molecule type" value="mRNA"/>
</dbReference>
<dbReference type="EMBL" id="AK223620">
    <property type="protein sequence ID" value="BAD97340.1"/>
    <property type="molecule type" value="mRNA"/>
</dbReference>
<dbReference type="EMBL" id="AC024267">
    <property type="status" value="NOT_ANNOTATED_CDS"/>
    <property type="molecule type" value="Genomic_DNA"/>
</dbReference>
<dbReference type="EMBL" id="AC024619">
    <property type="status" value="NOT_ANNOTATED_CDS"/>
    <property type="molecule type" value="Genomic_DNA"/>
</dbReference>
<dbReference type="EMBL" id="AL834405">
    <property type="protein sequence ID" value="CAD39067.1"/>
    <property type="molecule type" value="mRNA"/>
</dbReference>
<dbReference type="CCDS" id="CCDS45638.1">
    <molecule id="Q53EL9-3"/>
</dbReference>
<dbReference type="CCDS" id="CCDS45639.1">
    <molecule id="Q53EL9-1"/>
</dbReference>
<dbReference type="RefSeq" id="NP_001092105.1">
    <molecule id="Q53EL9-3"/>
    <property type="nucleotide sequence ID" value="NM_001098635.2"/>
</dbReference>
<dbReference type="RefSeq" id="NP_001277131.1">
    <molecule id="Q53EL9-2"/>
    <property type="nucleotide sequence ID" value="NM_001290202.2"/>
</dbReference>
<dbReference type="RefSeq" id="NP_849191.3">
    <molecule id="Q53EL9-1"/>
    <property type="nucleotide sequence ID" value="NM_178860.5"/>
</dbReference>
<dbReference type="SMR" id="Q53EL9"/>
<dbReference type="BioGRID" id="125899">
    <property type="interactions" value="13"/>
</dbReference>
<dbReference type="FunCoup" id="Q53EL9">
    <property type="interactions" value="67"/>
</dbReference>
<dbReference type="IntAct" id="Q53EL9">
    <property type="interactions" value="7"/>
</dbReference>
<dbReference type="MINT" id="Q53EL9"/>
<dbReference type="STRING" id="9606.ENSP00000312942"/>
<dbReference type="GlyCosmos" id="Q53EL9">
    <property type="glycosylation" value="4 sites, No reported glycans"/>
</dbReference>
<dbReference type="GlyGen" id="Q53EL9">
    <property type="glycosylation" value="9 sites, 1 N-linked glycan (1 site), 2 O-linked glycans (3 sites)"/>
</dbReference>
<dbReference type="iPTMnet" id="Q53EL9"/>
<dbReference type="PhosphoSitePlus" id="Q53EL9"/>
<dbReference type="BioMuta" id="SEZ6"/>
<dbReference type="DMDM" id="190410975"/>
<dbReference type="MassIVE" id="Q53EL9"/>
<dbReference type="PaxDb" id="9606-ENSP00000312942"/>
<dbReference type="PeptideAtlas" id="Q53EL9"/>
<dbReference type="ProteomicsDB" id="62438">
    <molecule id="Q53EL9-1"/>
</dbReference>
<dbReference type="ProteomicsDB" id="62439">
    <molecule id="Q53EL9-2"/>
</dbReference>
<dbReference type="ProteomicsDB" id="62440">
    <molecule id="Q53EL9-3"/>
</dbReference>
<dbReference type="ProteomicsDB" id="62441">
    <molecule id="Q53EL9-4"/>
</dbReference>
<dbReference type="ABCD" id="Q53EL9">
    <property type="antibodies" value="84 sequenced antibodies"/>
</dbReference>
<dbReference type="Antibodypedia" id="2178">
    <property type="antibodies" value="133 antibodies from 14 providers"/>
</dbReference>
<dbReference type="DNASU" id="124925"/>
<dbReference type="Ensembl" id="ENST00000317338.17">
    <molecule id="Q53EL9-1"/>
    <property type="protein sequence ID" value="ENSP00000312942.11"/>
    <property type="gene ID" value="ENSG00000063015.21"/>
</dbReference>
<dbReference type="Ensembl" id="ENST00000360295.13">
    <molecule id="Q53EL9-3"/>
    <property type="protein sequence ID" value="ENSP00000353440.9"/>
    <property type="gene ID" value="ENSG00000063015.21"/>
</dbReference>
<dbReference type="GeneID" id="124925"/>
<dbReference type="KEGG" id="hsa:124925"/>
<dbReference type="MANE-Select" id="ENST00000317338.17">
    <property type="protein sequence ID" value="ENSP00000312942.11"/>
    <property type="RefSeq nucleotide sequence ID" value="NM_178860.5"/>
    <property type="RefSeq protein sequence ID" value="NP_849191.3"/>
</dbReference>
<dbReference type="UCSC" id="uc002hdp.3">
    <molecule id="Q53EL9-1"/>
    <property type="organism name" value="human"/>
</dbReference>
<dbReference type="AGR" id="HGNC:15955"/>
<dbReference type="CTD" id="124925"/>
<dbReference type="DisGeNET" id="124925"/>
<dbReference type="GeneCards" id="SEZ6"/>
<dbReference type="HGNC" id="HGNC:15955">
    <property type="gene designation" value="SEZ6"/>
</dbReference>
<dbReference type="HPA" id="ENSG00000063015">
    <property type="expression patterns" value="Tissue enriched (brain)"/>
</dbReference>
<dbReference type="MIM" id="616666">
    <property type="type" value="gene"/>
</dbReference>
<dbReference type="neXtProt" id="NX_Q53EL9"/>
<dbReference type="OpenTargets" id="ENSG00000063015"/>
<dbReference type="PharmGKB" id="PA38065"/>
<dbReference type="VEuPathDB" id="HostDB:ENSG00000063015"/>
<dbReference type="eggNOG" id="KOG4297">
    <property type="taxonomic scope" value="Eukaryota"/>
</dbReference>
<dbReference type="GeneTree" id="ENSGT00940000156995"/>
<dbReference type="InParanoid" id="Q53EL9"/>
<dbReference type="OrthoDB" id="9935125at2759"/>
<dbReference type="PAN-GO" id="Q53EL9">
    <property type="GO annotations" value="7 GO annotations based on evolutionary models"/>
</dbReference>
<dbReference type="PhylomeDB" id="Q53EL9"/>
<dbReference type="TreeFam" id="TF330037"/>
<dbReference type="PathwayCommons" id="Q53EL9"/>
<dbReference type="SignaLink" id="Q53EL9"/>
<dbReference type="BioGRID-ORCS" id="124925">
    <property type="hits" value="17 hits in 1145 CRISPR screens"/>
</dbReference>
<dbReference type="ChiTaRS" id="SEZ6">
    <property type="organism name" value="human"/>
</dbReference>
<dbReference type="GeneWiki" id="SEZ6"/>
<dbReference type="GenomeRNAi" id="124925"/>
<dbReference type="Pharos" id="Q53EL9">
    <property type="development level" value="Tdark"/>
</dbReference>
<dbReference type="PRO" id="PR:Q53EL9"/>
<dbReference type="Proteomes" id="UP000005640">
    <property type="component" value="Chromosome 17"/>
</dbReference>
<dbReference type="RNAct" id="Q53EL9">
    <property type="molecule type" value="protein"/>
</dbReference>
<dbReference type="Bgee" id="ENSG00000063015">
    <property type="expression patterns" value="Expressed in cortical plate and 143 other cell types or tissues"/>
</dbReference>
<dbReference type="ExpressionAtlas" id="Q53EL9">
    <property type="expression patterns" value="baseline and differential"/>
</dbReference>
<dbReference type="GO" id="GO:0097440">
    <property type="term" value="C:apical dendrite"/>
    <property type="evidence" value="ECO:0007669"/>
    <property type="project" value="Ensembl"/>
</dbReference>
<dbReference type="GO" id="GO:0043198">
    <property type="term" value="C:dendritic shaft"/>
    <property type="evidence" value="ECO:0000318"/>
    <property type="project" value="GO_Central"/>
</dbReference>
<dbReference type="GO" id="GO:0043197">
    <property type="term" value="C:dendritic spine"/>
    <property type="evidence" value="ECO:0000318"/>
    <property type="project" value="GO_Central"/>
</dbReference>
<dbReference type="GO" id="GO:0005783">
    <property type="term" value="C:endoplasmic reticulum"/>
    <property type="evidence" value="ECO:0000318"/>
    <property type="project" value="GO_Central"/>
</dbReference>
<dbReference type="GO" id="GO:0043025">
    <property type="term" value="C:neuronal cell body"/>
    <property type="evidence" value="ECO:0000318"/>
    <property type="project" value="GO_Central"/>
</dbReference>
<dbReference type="GO" id="GO:0048471">
    <property type="term" value="C:perinuclear region of cytoplasm"/>
    <property type="evidence" value="ECO:0007669"/>
    <property type="project" value="Ensembl"/>
</dbReference>
<dbReference type="GO" id="GO:0005886">
    <property type="term" value="C:plasma membrane"/>
    <property type="evidence" value="ECO:0007669"/>
    <property type="project" value="UniProtKB-SubCell"/>
</dbReference>
<dbReference type="GO" id="GO:0008344">
    <property type="term" value="P:adult locomotory behavior"/>
    <property type="evidence" value="ECO:0007669"/>
    <property type="project" value="Ensembl"/>
</dbReference>
<dbReference type="GO" id="GO:0021680">
    <property type="term" value="P:cerebellar Purkinje cell layer development"/>
    <property type="evidence" value="ECO:0007669"/>
    <property type="project" value="Ensembl"/>
</dbReference>
<dbReference type="GO" id="GO:0060079">
    <property type="term" value="P:excitatory postsynaptic potential"/>
    <property type="evidence" value="ECO:0007669"/>
    <property type="project" value="Ensembl"/>
</dbReference>
<dbReference type="GO" id="GO:0050773">
    <property type="term" value="P:regulation of dendrite development"/>
    <property type="evidence" value="ECO:0000318"/>
    <property type="project" value="GO_Central"/>
</dbReference>
<dbReference type="GO" id="GO:0060074">
    <property type="term" value="P:synapse maturation"/>
    <property type="evidence" value="ECO:0000318"/>
    <property type="project" value="GO_Central"/>
</dbReference>
<dbReference type="CDD" id="cd00033">
    <property type="entry name" value="CCP"/>
    <property type="match status" value="5"/>
</dbReference>
<dbReference type="CDD" id="cd00041">
    <property type="entry name" value="CUB"/>
    <property type="match status" value="2"/>
</dbReference>
<dbReference type="FunFam" id="2.60.120.290:FF:000015">
    <property type="entry name" value="Seizure protein 6 homolog isoform 2"/>
    <property type="match status" value="1"/>
</dbReference>
<dbReference type="FunFam" id="2.60.120.290:FF:000025">
    <property type="entry name" value="Seizure related 6 homolog"/>
    <property type="match status" value="1"/>
</dbReference>
<dbReference type="FunFam" id="2.10.70.10:FF:000009">
    <property type="entry name" value="Seizure related 6 homolog like"/>
    <property type="match status" value="1"/>
</dbReference>
<dbReference type="FunFam" id="2.10.70.10:FF:000010">
    <property type="entry name" value="Seizure related 6 homolog like"/>
    <property type="match status" value="1"/>
</dbReference>
<dbReference type="FunFam" id="2.10.70.10:FF:000012">
    <property type="entry name" value="Seizure related 6 homolog like"/>
    <property type="match status" value="1"/>
</dbReference>
<dbReference type="Gene3D" id="2.10.70.10">
    <property type="entry name" value="Complement Module, domain 1"/>
    <property type="match status" value="5"/>
</dbReference>
<dbReference type="Gene3D" id="2.60.120.290">
    <property type="entry name" value="Spermadhesin, CUB domain"/>
    <property type="match status" value="2"/>
</dbReference>
<dbReference type="InterPro" id="IPR000859">
    <property type="entry name" value="CUB_dom"/>
</dbReference>
<dbReference type="InterPro" id="IPR051277">
    <property type="entry name" value="SEZ6_CSMD_C4BPB_Regulators"/>
</dbReference>
<dbReference type="InterPro" id="IPR035914">
    <property type="entry name" value="Sperma_CUB_dom_sf"/>
</dbReference>
<dbReference type="InterPro" id="IPR035976">
    <property type="entry name" value="Sushi/SCR/CCP_sf"/>
</dbReference>
<dbReference type="InterPro" id="IPR000436">
    <property type="entry name" value="Sushi_SCR_CCP_dom"/>
</dbReference>
<dbReference type="PANTHER" id="PTHR45656">
    <property type="entry name" value="PROTEIN CBR-CLEC-78"/>
    <property type="match status" value="1"/>
</dbReference>
<dbReference type="PANTHER" id="PTHR45656:SF4">
    <property type="entry name" value="PROTEIN CBR-CLEC-78"/>
    <property type="match status" value="1"/>
</dbReference>
<dbReference type="Pfam" id="PF00431">
    <property type="entry name" value="CUB"/>
    <property type="match status" value="2"/>
</dbReference>
<dbReference type="Pfam" id="PF00084">
    <property type="entry name" value="Sushi"/>
    <property type="match status" value="5"/>
</dbReference>
<dbReference type="SMART" id="SM00032">
    <property type="entry name" value="CCP"/>
    <property type="match status" value="5"/>
</dbReference>
<dbReference type="SMART" id="SM00042">
    <property type="entry name" value="CUB"/>
    <property type="match status" value="2"/>
</dbReference>
<dbReference type="SUPFAM" id="SSF57535">
    <property type="entry name" value="Complement control module/SCR domain"/>
    <property type="match status" value="5"/>
</dbReference>
<dbReference type="SUPFAM" id="SSF49854">
    <property type="entry name" value="Spermadhesin, CUB domain"/>
    <property type="match status" value="3"/>
</dbReference>
<dbReference type="PROSITE" id="PS01180">
    <property type="entry name" value="CUB"/>
    <property type="match status" value="2"/>
</dbReference>
<dbReference type="PROSITE" id="PS50923">
    <property type="entry name" value="SUSHI"/>
    <property type="match status" value="5"/>
</dbReference>
<proteinExistence type="evidence at protein level"/>
<reference key="1">
    <citation type="submission" date="2002-04" db="EMBL/GenBank/DDBJ databases">
        <authorList>
            <person name="Huang X.H."/>
            <person name="Guo J.H."/>
            <person name="Yu L."/>
        </authorList>
    </citation>
    <scope>NUCLEOTIDE SEQUENCE [LARGE SCALE MRNA] (ISOFORMS 1 AND 4)</scope>
    <source>
        <tissue>Brain</tissue>
        <tissue>Oligodendroglioma</tissue>
    </source>
</reference>
<reference key="2">
    <citation type="journal article" date="2004" name="Nat. Genet.">
        <title>Complete sequencing and characterization of 21,243 full-length human cDNAs.</title>
        <authorList>
            <person name="Ota T."/>
            <person name="Suzuki Y."/>
            <person name="Nishikawa T."/>
            <person name="Otsuki T."/>
            <person name="Sugiyama T."/>
            <person name="Irie R."/>
            <person name="Wakamatsu A."/>
            <person name="Hayashi K."/>
            <person name="Sato H."/>
            <person name="Nagai K."/>
            <person name="Kimura K."/>
            <person name="Makita H."/>
            <person name="Sekine M."/>
            <person name="Obayashi M."/>
            <person name="Nishi T."/>
            <person name="Shibahara T."/>
            <person name="Tanaka T."/>
            <person name="Ishii S."/>
            <person name="Yamamoto J."/>
            <person name="Saito K."/>
            <person name="Kawai Y."/>
            <person name="Isono Y."/>
            <person name="Nakamura Y."/>
            <person name="Nagahari K."/>
            <person name="Murakami K."/>
            <person name="Yasuda T."/>
            <person name="Iwayanagi T."/>
            <person name="Wagatsuma M."/>
            <person name="Shiratori A."/>
            <person name="Sudo H."/>
            <person name="Hosoiri T."/>
            <person name="Kaku Y."/>
            <person name="Kodaira H."/>
            <person name="Kondo H."/>
            <person name="Sugawara M."/>
            <person name="Takahashi M."/>
            <person name="Kanda K."/>
            <person name="Yokoi T."/>
            <person name="Furuya T."/>
            <person name="Kikkawa E."/>
            <person name="Omura Y."/>
            <person name="Abe K."/>
            <person name="Kamihara K."/>
            <person name="Katsuta N."/>
            <person name="Sato K."/>
            <person name="Tanikawa M."/>
            <person name="Yamazaki M."/>
            <person name="Ninomiya K."/>
            <person name="Ishibashi T."/>
            <person name="Yamashita H."/>
            <person name="Murakawa K."/>
            <person name="Fujimori K."/>
            <person name="Tanai H."/>
            <person name="Kimata M."/>
            <person name="Watanabe M."/>
            <person name="Hiraoka S."/>
            <person name="Chiba Y."/>
            <person name="Ishida S."/>
            <person name="Ono Y."/>
            <person name="Takiguchi S."/>
            <person name="Watanabe S."/>
            <person name="Yosida M."/>
            <person name="Hotuta T."/>
            <person name="Kusano J."/>
            <person name="Kanehori K."/>
            <person name="Takahashi-Fujii A."/>
            <person name="Hara H."/>
            <person name="Tanase T.-O."/>
            <person name="Nomura Y."/>
            <person name="Togiya S."/>
            <person name="Komai F."/>
            <person name="Hara R."/>
            <person name="Takeuchi K."/>
            <person name="Arita M."/>
            <person name="Imose N."/>
            <person name="Musashino K."/>
            <person name="Yuuki H."/>
            <person name="Oshima A."/>
            <person name="Sasaki N."/>
            <person name="Aotsuka S."/>
            <person name="Yoshikawa Y."/>
            <person name="Matsunawa H."/>
            <person name="Ichihara T."/>
            <person name="Shiohata N."/>
            <person name="Sano S."/>
            <person name="Moriya S."/>
            <person name="Momiyama H."/>
            <person name="Satoh N."/>
            <person name="Takami S."/>
            <person name="Terashima Y."/>
            <person name="Suzuki O."/>
            <person name="Nakagawa S."/>
            <person name="Senoh A."/>
            <person name="Mizoguchi H."/>
            <person name="Goto Y."/>
            <person name="Shimizu F."/>
            <person name="Wakebe H."/>
            <person name="Hishigaki H."/>
            <person name="Watanabe T."/>
            <person name="Sugiyama A."/>
            <person name="Takemoto M."/>
            <person name="Kawakami B."/>
            <person name="Yamazaki M."/>
            <person name="Watanabe K."/>
            <person name="Kumagai A."/>
            <person name="Itakura S."/>
            <person name="Fukuzumi Y."/>
            <person name="Fujimori Y."/>
            <person name="Komiyama M."/>
            <person name="Tashiro H."/>
            <person name="Tanigami A."/>
            <person name="Fujiwara T."/>
            <person name="Ono T."/>
            <person name="Yamada K."/>
            <person name="Fujii Y."/>
            <person name="Ozaki K."/>
            <person name="Hirao M."/>
            <person name="Ohmori Y."/>
            <person name="Kawabata A."/>
            <person name="Hikiji T."/>
            <person name="Kobatake N."/>
            <person name="Inagaki H."/>
            <person name="Ikema Y."/>
            <person name="Okamoto S."/>
            <person name="Okitani R."/>
            <person name="Kawakami T."/>
            <person name="Noguchi S."/>
            <person name="Itoh T."/>
            <person name="Shigeta K."/>
            <person name="Senba T."/>
            <person name="Matsumura K."/>
            <person name="Nakajima Y."/>
            <person name="Mizuno T."/>
            <person name="Morinaga M."/>
            <person name="Sasaki M."/>
            <person name="Togashi T."/>
            <person name="Oyama M."/>
            <person name="Hata H."/>
            <person name="Watanabe M."/>
            <person name="Komatsu T."/>
            <person name="Mizushima-Sugano J."/>
            <person name="Satoh T."/>
            <person name="Shirai Y."/>
            <person name="Takahashi Y."/>
            <person name="Nakagawa K."/>
            <person name="Okumura K."/>
            <person name="Nagase T."/>
            <person name="Nomura N."/>
            <person name="Kikuchi H."/>
            <person name="Masuho Y."/>
            <person name="Yamashita R."/>
            <person name="Nakai K."/>
            <person name="Yada T."/>
            <person name="Nakamura Y."/>
            <person name="Ohara O."/>
            <person name="Isogai T."/>
            <person name="Sugano S."/>
        </authorList>
    </citation>
    <scope>NUCLEOTIDE SEQUENCE [LARGE SCALE MRNA] (ISOFORM 2)</scope>
    <scope>VARIANT THR-806</scope>
    <source>
        <tissue>Brain</tissue>
        <tissue>Cerebellum</tissue>
    </source>
</reference>
<reference key="3">
    <citation type="submission" date="2005-04" db="EMBL/GenBank/DDBJ databases">
        <authorList>
            <person name="Totoki Y."/>
            <person name="Toyoda A."/>
            <person name="Takeda T."/>
            <person name="Sakaki Y."/>
            <person name="Tanaka A."/>
            <person name="Yokoyama S."/>
        </authorList>
    </citation>
    <scope>NUCLEOTIDE SEQUENCE [LARGE SCALE MRNA] (ISOFORM 1)</scope>
    <source>
        <tissue>Brain</tissue>
    </source>
</reference>
<reference key="4">
    <citation type="journal article" date="2006" name="Nature">
        <title>DNA sequence of human chromosome 17 and analysis of rearrangement in the human lineage.</title>
        <authorList>
            <person name="Zody M.C."/>
            <person name="Garber M."/>
            <person name="Adams D.J."/>
            <person name="Sharpe T."/>
            <person name="Harrow J."/>
            <person name="Lupski J.R."/>
            <person name="Nicholson C."/>
            <person name="Searle S.M."/>
            <person name="Wilming L."/>
            <person name="Young S.K."/>
            <person name="Abouelleil A."/>
            <person name="Allen N.R."/>
            <person name="Bi W."/>
            <person name="Bloom T."/>
            <person name="Borowsky M.L."/>
            <person name="Bugalter B.E."/>
            <person name="Butler J."/>
            <person name="Chang J.L."/>
            <person name="Chen C.-K."/>
            <person name="Cook A."/>
            <person name="Corum B."/>
            <person name="Cuomo C.A."/>
            <person name="de Jong P.J."/>
            <person name="DeCaprio D."/>
            <person name="Dewar K."/>
            <person name="FitzGerald M."/>
            <person name="Gilbert J."/>
            <person name="Gibson R."/>
            <person name="Gnerre S."/>
            <person name="Goldstein S."/>
            <person name="Grafham D.V."/>
            <person name="Grocock R."/>
            <person name="Hafez N."/>
            <person name="Hagopian D.S."/>
            <person name="Hart E."/>
            <person name="Norman C.H."/>
            <person name="Humphray S."/>
            <person name="Jaffe D.B."/>
            <person name="Jones M."/>
            <person name="Kamal M."/>
            <person name="Khodiyar V.K."/>
            <person name="LaButti K."/>
            <person name="Laird G."/>
            <person name="Lehoczky J."/>
            <person name="Liu X."/>
            <person name="Lokyitsang T."/>
            <person name="Loveland J."/>
            <person name="Lui A."/>
            <person name="Macdonald P."/>
            <person name="Major J.E."/>
            <person name="Matthews L."/>
            <person name="Mauceli E."/>
            <person name="McCarroll S.A."/>
            <person name="Mihalev A.H."/>
            <person name="Mudge J."/>
            <person name="Nguyen C."/>
            <person name="Nicol R."/>
            <person name="O'Leary S.B."/>
            <person name="Osoegawa K."/>
            <person name="Schwartz D.C."/>
            <person name="Shaw-Smith C."/>
            <person name="Stankiewicz P."/>
            <person name="Steward C."/>
            <person name="Swarbreck D."/>
            <person name="Venkataraman V."/>
            <person name="Whittaker C.A."/>
            <person name="Yang X."/>
            <person name="Zimmer A.R."/>
            <person name="Bradley A."/>
            <person name="Hubbard T."/>
            <person name="Birren B.W."/>
            <person name="Rogers J."/>
            <person name="Lander E.S."/>
            <person name="Nusbaum C."/>
        </authorList>
    </citation>
    <scope>NUCLEOTIDE SEQUENCE [LARGE SCALE GENOMIC DNA]</scope>
</reference>
<reference key="5">
    <citation type="journal article" date="2007" name="BMC Genomics">
        <title>The full-ORF clone resource of the German cDNA consortium.</title>
        <authorList>
            <person name="Bechtel S."/>
            <person name="Rosenfelder H."/>
            <person name="Duda A."/>
            <person name="Schmidt C.P."/>
            <person name="Ernst U."/>
            <person name="Wellenreuther R."/>
            <person name="Mehrle A."/>
            <person name="Schuster C."/>
            <person name="Bahr A."/>
            <person name="Bloecker H."/>
            <person name="Heubner D."/>
            <person name="Hoerlein A."/>
            <person name="Michel G."/>
            <person name="Wedler H."/>
            <person name="Koehrer K."/>
            <person name="Ottenwaelder B."/>
            <person name="Poustka A."/>
            <person name="Wiemann S."/>
            <person name="Schupp I."/>
        </authorList>
    </citation>
    <scope>NUCLEOTIDE SEQUENCE [LARGE SCALE MRNA] OF 22-994 (ISOFORM 3)</scope>
    <source>
        <tissue>Brain</tissue>
    </source>
</reference>
<reference key="6">
    <citation type="journal article" date="2013" name="J. Proteome Res.">
        <title>LC-MS/MS characterization of O-glycosylation sites and glycan structures of human cerebrospinal fluid glycoproteins.</title>
        <authorList>
            <person name="Halim A."/>
            <person name="Ruetschi U."/>
            <person name="Larson G."/>
            <person name="Nilsson J."/>
        </authorList>
    </citation>
    <scope>GLYCOSYLATION</scope>
    <scope>IDENTIFICATION BY MASS SPECTROMETRY</scope>
</reference>
<reference key="7">
    <citation type="journal article" date="2007" name="J. Neurosci. Res.">
        <title>Febrile seizures are associated with mutation of seizure-related (SEZ) 6, a brain-specific gene.</title>
        <authorList>
            <person name="Yu Z.-L."/>
            <person name="Jiang J.-M."/>
            <person name="Wu D.-H."/>
            <person name="Xie H.-J."/>
            <person name="Jiang J.-J."/>
            <person name="Zhou L."/>
            <person name="Peng L."/>
            <person name="Bao G.-S."/>
        </authorList>
    </citation>
    <scope>VARIANTS MET-300; VAL-330; ALA-592; ASN-736 AND VAL-756</scope>
</reference>
<protein>
    <recommendedName>
        <fullName>Seizure protein 6 homolog</fullName>
        <shortName>SEZ-6</shortName>
        <shortName>hSEZ-6</shortName>
    </recommendedName>
</protein>